<evidence type="ECO:0000255" key="1">
    <source>
        <dbReference type="PROSITE-ProRule" id="PRU00227"/>
    </source>
</evidence>
<evidence type="ECO:0000256" key="2">
    <source>
        <dbReference type="SAM" id="MobiDB-lite"/>
    </source>
</evidence>
<evidence type="ECO:0000269" key="3">
    <source>
    </source>
</evidence>
<evidence type="ECO:0000303" key="4">
    <source>
    </source>
</evidence>
<keyword id="KW-0238">DNA-binding</keyword>
<keyword id="KW-0479">Metal-binding</keyword>
<keyword id="KW-0539">Nucleus</keyword>
<keyword id="KW-1185">Reference proteome</keyword>
<keyword id="KW-0804">Transcription</keyword>
<keyword id="KW-0805">Transcription regulation</keyword>
<keyword id="KW-0862">Zinc</keyword>
<proteinExistence type="inferred from homology"/>
<gene>
    <name evidence="4" type="primary">opdR</name>
    <name type="ORF">PDE_01231</name>
</gene>
<comment type="function">
    <text evidence="3">Transcription factor; part of the gene cluster that mediates the biosynthesis of oxopyrrolidines, polyketide-amino acid hybrid compounds with feature structures of tetramic acid.</text>
</comment>
<comment type="subcellular location">
    <subcellularLocation>
        <location evidence="1">Nucleus</location>
    </subcellularLocation>
</comment>
<comment type="disruption phenotype">
    <text evidence="3">Does not affect the production of oxopyrrolidines A and B.</text>
</comment>
<protein>
    <recommendedName>
        <fullName evidence="4">Transcription factor opdR</fullName>
    </recommendedName>
    <alternativeName>
        <fullName evidence="4">Oxopyrrolidines biosynthesis cluster protein R</fullName>
    </alternativeName>
</protein>
<name>OPDR_PENO1</name>
<reference key="1">
    <citation type="journal article" date="2013" name="PLoS ONE">
        <title>Genomic and secretomic analyses reveal unique features of the lignocellulolytic enzyme system of Penicillium decumbens.</title>
        <authorList>
            <person name="Liu G."/>
            <person name="Zhang L."/>
            <person name="Wei X."/>
            <person name="Zou G."/>
            <person name="Qin Y."/>
            <person name="Ma L."/>
            <person name="Li J."/>
            <person name="Zheng H."/>
            <person name="Wang S."/>
            <person name="Wang C."/>
            <person name="Xun L."/>
            <person name="Zhao G.-P."/>
            <person name="Zhou Z."/>
            <person name="Qu Y."/>
        </authorList>
    </citation>
    <scope>NUCLEOTIDE SEQUENCE [LARGE SCALE GENOMIC DNA]</scope>
    <source>
        <strain>114-2 / CGMCC 5302</strain>
    </source>
</reference>
<reference key="2">
    <citation type="journal article" date="2022" name="Mar. Drugs">
        <title>Identification of PKS-NRPS Hybrid Metabolites in Marine-Derived Penicillium oxalicum.</title>
        <authorList>
            <person name="Li H."/>
            <person name="Zhang W."/>
            <person name="Zhang X."/>
            <person name="Tang S."/>
            <person name="Men P."/>
            <person name="Xiong M."/>
            <person name="Li Z."/>
            <person name="Zhang Y."/>
            <person name="Huang X."/>
            <person name="Lu X."/>
        </authorList>
    </citation>
    <scope>FUNCTION</scope>
    <scope>DISRUPTION PHENOTYPE</scope>
</reference>
<accession>S7Z6W7</accession>
<feature type="chain" id="PRO_0000457068" description="Transcription factor opdR">
    <location>
        <begin position="1"/>
        <end position="793"/>
    </location>
</feature>
<feature type="DNA-binding region" description="Zn(2)-C6 fungal-type" evidence="1">
    <location>
        <begin position="25"/>
        <end position="53"/>
    </location>
</feature>
<feature type="region of interest" description="Disordered" evidence="2">
    <location>
        <begin position="1"/>
        <end position="29"/>
    </location>
</feature>
<feature type="region of interest" description="Disordered" evidence="2">
    <location>
        <begin position="60"/>
        <end position="113"/>
    </location>
</feature>
<feature type="region of interest" description="Disordered" evidence="2">
    <location>
        <begin position="457"/>
        <end position="476"/>
    </location>
</feature>
<dbReference type="EMBL" id="KB644408">
    <property type="protein sequence ID" value="EPS26295.1"/>
    <property type="molecule type" value="Genomic_DNA"/>
</dbReference>
<dbReference type="SMR" id="S7Z6W7"/>
<dbReference type="eggNOG" id="ENOG502SMMJ">
    <property type="taxonomic scope" value="Eukaryota"/>
</dbReference>
<dbReference type="HOGENOM" id="CLU_007091_3_2_1"/>
<dbReference type="OrthoDB" id="4337792at2759"/>
<dbReference type="PhylomeDB" id="S7Z6W7"/>
<dbReference type="Proteomes" id="UP000019376">
    <property type="component" value="Unassembled WGS sequence"/>
</dbReference>
<dbReference type="GO" id="GO:0005634">
    <property type="term" value="C:nucleus"/>
    <property type="evidence" value="ECO:0007669"/>
    <property type="project" value="UniProtKB-SubCell"/>
</dbReference>
<dbReference type="GO" id="GO:0001228">
    <property type="term" value="F:DNA-binding transcription activator activity, RNA polymerase II-specific"/>
    <property type="evidence" value="ECO:0007669"/>
    <property type="project" value="TreeGrafter"/>
</dbReference>
<dbReference type="GO" id="GO:0000978">
    <property type="term" value="F:RNA polymerase II cis-regulatory region sequence-specific DNA binding"/>
    <property type="evidence" value="ECO:0007669"/>
    <property type="project" value="TreeGrafter"/>
</dbReference>
<dbReference type="GO" id="GO:0008270">
    <property type="term" value="F:zinc ion binding"/>
    <property type="evidence" value="ECO:0007669"/>
    <property type="project" value="InterPro"/>
</dbReference>
<dbReference type="GO" id="GO:0006351">
    <property type="term" value="P:DNA-templated transcription"/>
    <property type="evidence" value="ECO:0007669"/>
    <property type="project" value="InterPro"/>
</dbReference>
<dbReference type="CDD" id="cd12148">
    <property type="entry name" value="fungal_TF_MHR"/>
    <property type="match status" value="1"/>
</dbReference>
<dbReference type="CDD" id="cd00067">
    <property type="entry name" value="GAL4"/>
    <property type="match status" value="1"/>
</dbReference>
<dbReference type="Gene3D" id="4.10.240.10">
    <property type="entry name" value="Zn(2)-C6 fungal-type DNA-binding domain"/>
    <property type="match status" value="1"/>
</dbReference>
<dbReference type="InterPro" id="IPR051430">
    <property type="entry name" value="Fungal_TF_Env_Response"/>
</dbReference>
<dbReference type="InterPro" id="IPR007219">
    <property type="entry name" value="Transcription_factor_dom_fun"/>
</dbReference>
<dbReference type="InterPro" id="IPR036864">
    <property type="entry name" value="Zn2-C6_fun-type_DNA-bd_sf"/>
</dbReference>
<dbReference type="InterPro" id="IPR001138">
    <property type="entry name" value="Zn2Cys6_DnaBD"/>
</dbReference>
<dbReference type="PANTHER" id="PTHR31944:SF129">
    <property type="entry name" value="ASPYRIDONES CLUSTER REGULATOR APDR-RELATED"/>
    <property type="match status" value="1"/>
</dbReference>
<dbReference type="PANTHER" id="PTHR31944">
    <property type="entry name" value="HEME-RESPONSIVE ZINC FINGER TRANSCRIPTION FACTOR HAP1"/>
    <property type="match status" value="1"/>
</dbReference>
<dbReference type="Pfam" id="PF04082">
    <property type="entry name" value="Fungal_trans"/>
    <property type="match status" value="1"/>
</dbReference>
<dbReference type="Pfam" id="PF00172">
    <property type="entry name" value="Zn_clus"/>
    <property type="match status" value="1"/>
</dbReference>
<dbReference type="SMART" id="SM00906">
    <property type="entry name" value="Fungal_trans"/>
    <property type="match status" value="1"/>
</dbReference>
<dbReference type="SMART" id="SM00066">
    <property type="entry name" value="GAL4"/>
    <property type="match status" value="1"/>
</dbReference>
<dbReference type="SUPFAM" id="SSF57701">
    <property type="entry name" value="Zn2/Cys6 DNA-binding domain"/>
    <property type="match status" value="1"/>
</dbReference>
<dbReference type="PROSITE" id="PS00463">
    <property type="entry name" value="ZN2_CY6_FUNGAL_1"/>
    <property type="match status" value="1"/>
</dbReference>
<dbReference type="PROSITE" id="PS50048">
    <property type="entry name" value="ZN2_CY6_FUNGAL_2"/>
    <property type="match status" value="1"/>
</dbReference>
<sequence length="793" mass="89453">MAQDQNVPLVATSPPRKRRRPPKSCDPCRRRKVRCDRKFPCGQCERARTALQCNYAPIVTASSPSGGDISHLAAPSVREGDSPPSEPADPQRPSRPSAHSSHLLPPEQHQSQNKIIQNLQRRIRRLEDQLPYPATSRTTTGPDSDVSQAQALRHLHDRVLLTEEQWSDFSQPNNLVNGWAIPAIQPRLRVTPDKTKVFGPSHWLHTAEKFQVLGKFDAKEVEPSLQGVDSRSEVAGILKDCRHLRQTMKAQESVRLNHPVPDILSTLPTQEVCDSLVDAYLRTFELIYRIVHIPTFWEDYRRFWTQPQSTSTHFLMQLVLILALGTIFYSDRSKRVNLRRLAHTWIYAAQWWLVGPSEKSTVNLEGLQVGCLLLLARQTNILPTTSWLSVGSVLRMAMVMGLHRAPDLFPALSEYQSEMRVRLWVTVLELTLLSSLDASMPLPFSLQDIDCMAPSNLDDEQFGPKTERLPRPQPSERLTESSIQILLHKSLPVRVEAVRLLNNQHRQELSYETALRLGTELRSACRDVAALFDTARNQSRHVTPSSKMAPFHLRFIDTYLRRYILFLHRPFMIQARKDPRFYLSRKVCLDSCVVIASYADHLRLPSDNLDDLSHLAIVGRGSFKGALSFDVIISLGLEIITQLEEEASTRPSGSSPPFVADHLDKMAKANRVPLIRSLEHIQEQLLQIIALGNPSLKRYNFLCAILSQIRAMESGQPIQPAIYATIKESLLKCYTLLKASHAASSPQESVESLTTGPDSLPDFDVDALDPALGLEIPSLLFFPGLMDMSGTEW</sequence>
<organism>
    <name type="scientific">Penicillium oxalicum (strain 114-2 / CGMCC 5302)</name>
    <name type="common">Penicillium decumbens</name>
    <dbReference type="NCBI Taxonomy" id="933388"/>
    <lineage>
        <taxon>Eukaryota</taxon>
        <taxon>Fungi</taxon>
        <taxon>Dikarya</taxon>
        <taxon>Ascomycota</taxon>
        <taxon>Pezizomycotina</taxon>
        <taxon>Eurotiomycetes</taxon>
        <taxon>Eurotiomycetidae</taxon>
        <taxon>Eurotiales</taxon>
        <taxon>Aspergillaceae</taxon>
        <taxon>Penicillium</taxon>
    </lineage>
</organism>